<reference key="1">
    <citation type="journal article" date="2005" name="J. Bacteriol.">
        <title>Genomic sequence of an otitis media isolate of nontypeable Haemophilus influenzae: comparative study with H. influenzae serotype d, strain KW20.</title>
        <authorList>
            <person name="Harrison A."/>
            <person name="Dyer D.W."/>
            <person name="Gillaspy A."/>
            <person name="Ray W.C."/>
            <person name="Mungur R."/>
            <person name="Carson M.B."/>
            <person name="Zhong H."/>
            <person name="Gipson J."/>
            <person name="Gipson M."/>
            <person name="Johnson L.S."/>
            <person name="Lewis L."/>
            <person name="Bakaletz L.O."/>
            <person name="Munson R.S. Jr."/>
        </authorList>
    </citation>
    <scope>NUCLEOTIDE SEQUENCE [LARGE SCALE GENOMIC DNA]</scope>
    <source>
        <strain>86-028NP</strain>
    </source>
</reference>
<evidence type="ECO:0000255" key="1">
    <source>
        <dbReference type="HAMAP-Rule" id="MF_01345"/>
    </source>
</evidence>
<evidence type="ECO:0000305" key="2"/>
<protein>
    <recommendedName>
        <fullName evidence="1">Small ribosomal subunit protein uS17</fullName>
    </recommendedName>
    <alternativeName>
        <fullName evidence="2">30S ribosomal protein S17</fullName>
    </alternativeName>
</protein>
<sequence length="85" mass="9789">MTDKIRSVQGKVVSDKMEKSFVVAIERKVKHPLYGKFIRRTTKLHVHDENNEAKVGDTVEIRECRPLSKTKSWTLVRVVEKAVIA</sequence>
<organism>
    <name type="scientific">Haemophilus influenzae (strain 86-028NP)</name>
    <dbReference type="NCBI Taxonomy" id="281310"/>
    <lineage>
        <taxon>Bacteria</taxon>
        <taxon>Pseudomonadati</taxon>
        <taxon>Pseudomonadota</taxon>
        <taxon>Gammaproteobacteria</taxon>
        <taxon>Pasteurellales</taxon>
        <taxon>Pasteurellaceae</taxon>
        <taxon>Haemophilus</taxon>
    </lineage>
</organism>
<accession>Q4QMB3</accession>
<proteinExistence type="inferred from homology"/>
<name>RS17_HAEI8</name>
<gene>
    <name evidence="1" type="primary">rpsQ</name>
    <name type="ordered locus">NTHI0948</name>
</gene>
<feature type="chain" id="PRO_0000233486" description="Small ribosomal subunit protein uS17">
    <location>
        <begin position="1"/>
        <end position="85"/>
    </location>
</feature>
<comment type="function">
    <text evidence="1">One of the primary rRNA binding proteins, it binds specifically to the 5'-end of 16S ribosomal RNA.</text>
</comment>
<comment type="subunit">
    <text evidence="1">Part of the 30S ribosomal subunit.</text>
</comment>
<comment type="similarity">
    <text evidence="1">Belongs to the universal ribosomal protein uS17 family.</text>
</comment>
<dbReference type="EMBL" id="CP000057">
    <property type="protein sequence ID" value="AAX87834.1"/>
    <property type="molecule type" value="Genomic_DNA"/>
</dbReference>
<dbReference type="RefSeq" id="WP_005625886.1">
    <property type="nucleotide sequence ID" value="NC_007146.2"/>
</dbReference>
<dbReference type="SMR" id="Q4QMB3"/>
<dbReference type="GeneID" id="93219826"/>
<dbReference type="KEGG" id="hit:NTHI0948"/>
<dbReference type="HOGENOM" id="CLU_073626_1_1_6"/>
<dbReference type="Proteomes" id="UP000002525">
    <property type="component" value="Chromosome"/>
</dbReference>
<dbReference type="GO" id="GO:0022627">
    <property type="term" value="C:cytosolic small ribosomal subunit"/>
    <property type="evidence" value="ECO:0007669"/>
    <property type="project" value="TreeGrafter"/>
</dbReference>
<dbReference type="GO" id="GO:0019843">
    <property type="term" value="F:rRNA binding"/>
    <property type="evidence" value="ECO:0007669"/>
    <property type="project" value="UniProtKB-UniRule"/>
</dbReference>
<dbReference type="GO" id="GO:0003735">
    <property type="term" value="F:structural constituent of ribosome"/>
    <property type="evidence" value="ECO:0007669"/>
    <property type="project" value="InterPro"/>
</dbReference>
<dbReference type="GO" id="GO:0006412">
    <property type="term" value="P:translation"/>
    <property type="evidence" value="ECO:0007669"/>
    <property type="project" value="UniProtKB-UniRule"/>
</dbReference>
<dbReference type="CDD" id="cd00364">
    <property type="entry name" value="Ribosomal_uS17"/>
    <property type="match status" value="1"/>
</dbReference>
<dbReference type="FunFam" id="2.40.50.140:FF:000014">
    <property type="entry name" value="30S ribosomal protein S17"/>
    <property type="match status" value="1"/>
</dbReference>
<dbReference type="Gene3D" id="2.40.50.140">
    <property type="entry name" value="Nucleic acid-binding proteins"/>
    <property type="match status" value="1"/>
</dbReference>
<dbReference type="HAMAP" id="MF_01345_B">
    <property type="entry name" value="Ribosomal_uS17_B"/>
    <property type="match status" value="1"/>
</dbReference>
<dbReference type="InterPro" id="IPR012340">
    <property type="entry name" value="NA-bd_OB-fold"/>
</dbReference>
<dbReference type="InterPro" id="IPR000266">
    <property type="entry name" value="Ribosomal_uS17"/>
</dbReference>
<dbReference type="InterPro" id="IPR019984">
    <property type="entry name" value="Ribosomal_uS17_bact/chlr"/>
</dbReference>
<dbReference type="InterPro" id="IPR019979">
    <property type="entry name" value="Ribosomal_uS17_CS"/>
</dbReference>
<dbReference type="NCBIfam" id="NF004123">
    <property type="entry name" value="PRK05610.1"/>
    <property type="match status" value="1"/>
</dbReference>
<dbReference type="NCBIfam" id="TIGR03635">
    <property type="entry name" value="uS17_bact"/>
    <property type="match status" value="1"/>
</dbReference>
<dbReference type="PANTHER" id="PTHR10744">
    <property type="entry name" value="40S RIBOSOMAL PROTEIN S11 FAMILY MEMBER"/>
    <property type="match status" value="1"/>
</dbReference>
<dbReference type="PANTHER" id="PTHR10744:SF1">
    <property type="entry name" value="SMALL RIBOSOMAL SUBUNIT PROTEIN US17M"/>
    <property type="match status" value="1"/>
</dbReference>
<dbReference type="Pfam" id="PF00366">
    <property type="entry name" value="Ribosomal_S17"/>
    <property type="match status" value="1"/>
</dbReference>
<dbReference type="PRINTS" id="PR00973">
    <property type="entry name" value="RIBOSOMALS17"/>
</dbReference>
<dbReference type="SUPFAM" id="SSF50249">
    <property type="entry name" value="Nucleic acid-binding proteins"/>
    <property type="match status" value="1"/>
</dbReference>
<dbReference type="PROSITE" id="PS00056">
    <property type="entry name" value="RIBOSOMAL_S17"/>
    <property type="match status" value="1"/>
</dbReference>
<keyword id="KW-0687">Ribonucleoprotein</keyword>
<keyword id="KW-0689">Ribosomal protein</keyword>
<keyword id="KW-0694">RNA-binding</keyword>
<keyword id="KW-0699">rRNA-binding</keyword>